<keyword id="KW-0067">ATP-binding</keyword>
<keyword id="KW-0317">Glutathione biosynthesis</keyword>
<keyword id="KW-0436">Ligase</keyword>
<keyword id="KW-0547">Nucleotide-binding</keyword>
<name>GSH1_PSEE4</name>
<proteinExistence type="inferred from homology"/>
<comment type="catalytic activity">
    <reaction evidence="1">
        <text>L-cysteine + L-glutamate + ATP = gamma-L-glutamyl-L-cysteine + ADP + phosphate + H(+)</text>
        <dbReference type="Rhea" id="RHEA:13285"/>
        <dbReference type="ChEBI" id="CHEBI:15378"/>
        <dbReference type="ChEBI" id="CHEBI:29985"/>
        <dbReference type="ChEBI" id="CHEBI:30616"/>
        <dbReference type="ChEBI" id="CHEBI:35235"/>
        <dbReference type="ChEBI" id="CHEBI:43474"/>
        <dbReference type="ChEBI" id="CHEBI:58173"/>
        <dbReference type="ChEBI" id="CHEBI:456216"/>
        <dbReference type="EC" id="6.3.2.2"/>
    </reaction>
</comment>
<comment type="pathway">
    <text evidence="1">Sulfur metabolism; glutathione biosynthesis; glutathione from L-cysteine and L-glutamate: step 1/2.</text>
</comment>
<comment type="similarity">
    <text evidence="1">Belongs to the glutamate--cysteine ligase type 1 family. Type 1 subfamily.</text>
</comment>
<feature type="chain" id="PRO_1000025179" description="Glutamate--cysteine ligase">
    <location>
        <begin position="1"/>
        <end position="530"/>
    </location>
</feature>
<sequence>MKESILSDLLNRRLSLLGANLDLLKQCLHGIERECLRVTDDGRLAQTPHPEALGSALTNEQITTDYSESLLEFITPALADPAKVLDSLEEIHRFVYTKLGGEYLWSPSMPCALPAEEDIPIAEYGSSNIGKLKHVYRKGLALRYGRTMQCIAGIHYNFSLPEALWPLLRDAEGGEQNDRDYQSSAYIALIRNFRRYSWLLMYLFGASPTLDKGFLRGRPHQLEELDEQTLYLPYATSLRMSDLGYQSNAQAGLTPCYNNLASYTDSLRKAVGTPYPPYVEVGTHKDGEWVQLNTNILQIENEYYSNIRPKRVTYTGERPIQALMSRGVQYVEVRCLDINPFLPVGIDLPEARFLDAFLLFCALEESPQLDNGECGQCTDNFLTVVKEGRRPGLELRRDGQPVALKAWATELIERIGQLAGLLDRAHGGNAHAKALETQQAKVDDPELTPSAQVLARMTEHDETFVQFSLRQSRLHAEAFREQPLPAERQQAYETLARESLAEQSRLEQQEVGDFDLFVGAYQASILAISN</sequence>
<reference key="1">
    <citation type="journal article" date="2006" name="Nat. Biotechnol.">
        <title>Complete genome sequence of the entomopathogenic and metabolically versatile soil bacterium Pseudomonas entomophila.</title>
        <authorList>
            <person name="Vodovar N."/>
            <person name="Vallenet D."/>
            <person name="Cruveiller S."/>
            <person name="Rouy Z."/>
            <person name="Barbe V."/>
            <person name="Acosta C."/>
            <person name="Cattolico L."/>
            <person name="Jubin C."/>
            <person name="Lajus A."/>
            <person name="Segurens B."/>
            <person name="Vacherie B."/>
            <person name="Wincker P."/>
            <person name="Weissenbach J."/>
            <person name="Lemaitre B."/>
            <person name="Medigue C."/>
            <person name="Boccard F."/>
        </authorList>
    </citation>
    <scope>NUCLEOTIDE SEQUENCE [LARGE SCALE GENOMIC DNA]</scope>
    <source>
        <strain>L48</strain>
    </source>
</reference>
<evidence type="ECO:0000255" key="1">
    <source>
        <dbReference type="HAMAP-Rule" id="MF_00578"/>
    </source>
</evidence>
<protein>
    <recommendedName>
        <fullName evidence="1">Glutamate--cysteine ligase</fullName>
        <ecNumber evidence="1">6.3.2.2</ecNumber>
    </recommendedName>
    <alternativeName>
        <fullName evidence="1">Gamma-ECS</fullName>
        <shortName evidence="1">GCS</shortName>
    </alternativeName>
    <alternativeName>
        <fullName evidence="1">Gamma-glutamylcysteine synthetase</fullName>
    </alternativeName>
</protein>
<gene>
    <name evidence="1" type="primary">gshA</name>
    <name type="ordered locus">PSEEN0224</name>
</gene>
<organism>
    <name type="scientific">Pseudomonas entomophila (strain L48)</name>
    <dbReference type="NCBI Taxonomy" id="384676"/>
    <lineage>
        <taxon>Bacteria</taxon>
        <taxon>Pseudomonadati</taxon>
        <taxon>Pseudomonadota</taxon>
        <taxon>Gammaproteobacteria</taxon>
        <taxon>Pseudomonadales</taxon>
        <taxon>Pseudomonadaceae</taxon>
        <taxon>Pseudomonas</taxon>
    </lineage>
</organism>
<accession>Q1IGL1</accession>
<dbReference type="EC" id="6.3.2.2" evidence="1"/>
<dbReference type="EMBL" id="CT573326">
    <property type="protein sequence ID" value="CAK13191.1"/>
    <property type="molecule type" value="Genomic_DNA"/>
</dbReference>
<dbReference type="SMR" id="Q1IGL1"/>
<dbReference type="STRING" id="384676.PSEEN0224"/>
<dbReference type="KEGG" id="pen:PSEEN0224"/>
<dbReference type="eggNOG" id="COG2918">
    <property type="taxonomic scope" value="Bacteria"/>
</dbReference>
<dbReference type="HOGENOM" id="CLU_020728_3_0_6"/>
<dbReference type="OrthoDB" id="9803907at2"/>
<dbReference type="UniPathway" id="UPA00142">
    <property type="reaction ID" value="UER00209"/>
</dbReference>
<dbReference type="Proteomes" id="UP000000658">
    <property type="component" value="Chromosome"/>
</dbReference>
<dbReference type="GO" id="GO:0005829">
    <property type="term" value="C:cytosol"/>
    <property type="evidence" value="ECO:0007669"/>
    <property type="project" value="TreeGrafter"/>
</dbReference>
<dbReference type="GO" id="GO:0005524">
    <property type="term" value="F:ATP binding"/>
    <property type="evidence" value="ECO:0007669"/>
    <property type="project" value="UniProtKB-KW"/>
</dbReference>
<dbReference type="GO" id="GO:0004357">
    <property type="term" value="F:glutamate-cysteine ligase activity"/>
    <property type="evidence" value="ECO:0007669"/>
    <property type="project" value="UniProtKB-UniRule"/>
</dbReference>
<dbReference type="GO" id="GO:0046872">
    <property type="term" value="F:metal ion binding"/>
    <property type="evidence" value="ECO:0007669"/>
    <property type="project" value="TreeGrafter"/>
</dbReference>
<dbReference type="GO" id="GO:0006750">
    <property type="term" value="P:glutathione biosynthetic process"/>
    <property type="evidence" value="ECO:0007669"/>
    <property type="project" value="UniProtKB-UniRule"/>
</dbReference>
<dbReference type="Gene3D" id="3.30.590.20">
    <property type="match status" value="1"/>
</dbReference>
<dbReference type="HAMAP" id="MF_00578">
    <property type="entry name" value="Glu_cys_ligase"/>
    <property type="match status" value="1"/>
</dbReference>
<dbReference type="InterPro" id="IPR014746">
    <property type="entry name" value="Gln_synth/guanido_kin_cat_dom"/>
</dbReference>
<dbReference type="InterPro" id="IPR007370">
    <property type="entry name" value="Glu_cys_ligase"/>
</dbReference>
<dbReference type="InterPro" id="IPR006334">
    <property type="entry name" value="Glut_cys_ligase"/>
</dbReference>
<dbReference type="NCBIfam" id="TIGR01434">
    <property type="entry name" value="glu_cys_ligase"/>
    <property type="match status" value="1"/>
</dbReference>
<dbReference type="PANTHER" id="PTHR38761">
    <property type="entry name" value="GLUTAMATE--CYSTEINE LIGASE"/>
    <property type="match status" value="1"/>
</dbReference>
<dbReference type="PANTHER" id="PTHR38761:SF1">
    <property type="entry name" value="GLUTAMATE--CYSTEINE LIGASE"/>
    <property type="match status" value="1"/>
</dbReference>
<dbReference type="Pfam" id="PF04262">
    <property type="entry name" value="Glu_cys_ligase"/>
    <property type="match status" value="1"/>
</dbReference>
<dbReference type="SUPFAM" id="SSF55931">
    <property type="entry name" value="Glutamine synthetase/guanido kinase"/>
    <property type="match status" value="1"/>
</dbReference>